<accession>Q4JQX0</accession>
<organism>
    <name type="scientific">Varicella-zoster virus (strain Oka vaccine)</name>
    <name type="common">HHV-3</name>
    <name type="synonym">Human herpesvirus 3</name>
    <dbReference type="NCBI Taxonomy" id="341980"/>
    <lineage>
        <taxon>Viruses</taxon>
        <taxon>Duplodnaviria</taxon>
        <taxon>Heunggongvirae</taxon>
        <taxon>Peploviricota</taxon>
        <taxon>Herviviricetes</taxon>
        <taxon>Herpesvirales</taxon>
        <taxon>Orthoherpesviridae</taxon>
        <taxon>Alphaherpesvirinae</taxon>
        <taxon>Varicellovirus</taxon>
        <taxon>Varicellovirus humanalpha3</taxon>
        <taxon>Human herpesvirus 3</taxon>
    </lineage>
</organism>
<organismHost>
    <name type="scientific">Homo sapiens</name>
    <name type="common">Human</name>
    <dbReference type="NCBI Taxonomy" id="9606"/>
</organismHost>
<evidence type="ECO:0000250" key="1"/>
<evidence type="ECO:0000255" key="2"/>
<evidence type="ECO:0000305" key="3"/>
<feature type="signal peptide" evidence="2">
    <location>
        <begin position="1"/>
        <end position="21"/>
    </location>
</feature>
<feature type="chain" id="PRO_0000385465" description="Envelope glycoprotein K">
    <location>
        <begin position="22"/>
        <end position="340"/>
    </location>
</feature>
<feature type="topological domain" description="Extracellular" evidence="2">
    <location>
        <begin position="22"/>
        <end position="114"/>
    </location>
</feature>
<feature type="transmembrane region" description="Helical" evidence="2">
    <location>
        <begin position="115"/>
        <end position="135"/>
    </location>
</feature>
<feature type="topological domain" description="Cytoplasmic" evidence="2">
    <location>
        <begin position="136"/>
        <end position="211"/>
    </location>
</feature>
<feature type="transmembrane region" description="Helical" evidence="2">
    <location>
        <begin position="212"/>
        <end position="232"/>
    </location>
</feature>
<feature type="topological domain" description="Extracellular" evidence="2">
    <location>
        <begin position="233"/>
        <end position="248"/>
    </location>
</feature>
<feature type="transmembrane region" description="Helical" evidence="2">
    <location>
        <begin position="249"/>
        <end position="269"/>
    </location>
</feature>
<feature type="topological domain" description="Cytoplasmic" evidence="2">
    <location>
        <begin position="270"/>
        <end position="298"/>
    </location>
</feature>
<feature type="transmembrane region" description="Helical" evidence="2">
    <location>
        <begin position="299"/>
        <end position="319"/>
    </location>
</feature>
<feature type="topological domain" description="Extracellular" evidence="2">
    <location>
        <begin position="320"/>
        <end position="340"/>
    </location>
</feature>
<feature type="glycosylation site" description="N-linked (GlcNAc...) asparagine; by host" evidence="2">
    <location>
        <position position="55"/>
    </location>
</feature>
<feature type="glycosylation site" description="N-linked (GlcNAc...) asparagine; by host" evidence="2">
    <location>
        <position position="65"/>
    </location>
</feature>
<sequence length="340" mass="38577">MQALGIKTEHFIIMCLLSGHAVFTLWYTARVKFEHECVYATTVINGGPVVWGSYNNSLIYVTFVNHSTFLDGLSGYDYSCRENLLSGDTMVKTAISTPLHDKIRIVLGTRNCHAYFWCVQLKMIFFAWFVYGMYLQFRRIRRMFGPFRSSCELISPTSYSLNYVTRVISNILLGYPYTKLARLLCDVSMRRDGMSKVFNADPISFLYMHKGVTLLMLLEVIAHISSGCIVLLTLGVAYTPCALLYPTYIRILAWVVVCTLAIVELISYVRPKPTKDNHLNHINTGGIRGICTTCCATVMSGLAIKCFYIVIFAIAVVIFMHYEQRVQVSLFGESENSQKH</sequence>
<gene>
    <name type="primary">gK</name>
    <name type="ORF">ORF5</name>
</gene>
<reference key="1">
    <citation type="journal article" date="2002" name="J. Virol.">
        <title>Comparison of the complete DNA sequences of the Oka varicella vaccine and its parental virus.</title>
        <authorList>
            <person name="Gomi Y."/>
            <person name="Sunamachi H."/>
            <person name="Mori Y."/>
            <person name="Nagaike K."/>
            <person name="Takahashi M."/>
            <person name="Yamanishi K."/>
        </authorList>
    </citation>
    <scope>NUCLEOTIDE SEQUENCE [LARGE SCALE GENOMIC DNA]</scope>
    <source>
        <strain>Isolate Human/Japan/P-Oka/1970</strain>
        <strain>Oka varicella vaccine Biken (V-Oka-Biken)</strain>
    </source>
</reference>
<reference key="2">
    <citation type="journal article" date="2008" name="J. Virol.">
        <title>Complete DNA sequences of two oka strain varicella-zoster virus genomes.</title>
        <authorList>
            <person name="Tillieux S.L."/>
            <person name="Halsey W.S."/>
            <person name="Thomas E.S."/>
            <person name="Voycik J.J."/>
            <person name="Sathe G.M."/>
            <person name="Vassilev V."/>
        </authorList>
    </citation>
    <scope>NUCLEOTIDE SEQUENCE [LARGE SCALE GENOMIC DNA]</scope>
    <source>
        <strain>Oka varicella vaccine VarilRix (V-Oka-GSK)</strain>
        <strain>Oka varicella vaccine Varivax (V-Oka-Merck)</strain>
    </source>
</reference>
<comment type="function">
    <text evidence="1">Glycoprotein that probably modulates membrane fusion events during secondary envelopment of cytoplasmic capsids that bud into specific trans-Golgi network (TGN)-derived membranes. Also plays a role, together with gB, in virus-induced cell-to-cell fusion (syncytia formation), which is extensive during VZV infection in cultured cells (By similarity).</text>
</comment>
<comment type="subunit">
    <text>Interacts (via UL20 interaction region) with protein UL20 homolog (via N-terminus); this interaction probably plays a role in the coordinate transport of protein UL20 homolog and gK to the trans-Golgi network (TGN), and is required for the cell surface expression of gK.</text>
</comment>
<comment type="subcellular location">
    <subcellularLocation>
        <location evidence="1">Host cell membrane</location>
        <topology evidence="1">Multi-pass membrane protein</topology>
    </subcellularLocation>
    <subcellularLocation>
        <location evidence="1">Host endosome membrane</location>
        <topology evidence="1">Multi-pass membrane protein</topology>
    </subcellularLocation>
    <subcellularLocation>
        <location evidence="1">Host Golgi apparatus membrane</location>
        <topology evidence="1">Multi-pass membrane protein</topology>
    </subcellularLocation>
    <text evidence="1">During virion morphogenesis, this protein probably accumulates in the endosomes and trans-Golgi where secondary envelopment occurs. It is probably transported with UL20 to the cell surface from where it is endocytosed and directed to the trans-Golgi network (TGN). Cell surface expression of gK is required for virus-induced cell-to-cell fusion. Likely not present in extracellular virions (By similarity).</text>
</comment>
<comment type="similarity">
    <text evidence="3">Belongs to the alphaherpesvirinae glycoprotein K family.</text>
</comment>
<name>GK_VZVO</name>
<dbReference type="EMBL" id="AB097932">
    <property type="status" value="NOT_ANNOTATED_CDS"/>
    <property type="molecule type" value="Genomic_DNA"/>
</dbReference>
<dbReference type="EMBL" id="AB097933">
    <property type="status" value="NOT_ANNOTATED_CDS"/>
    <property type="molecule type" value="Genomic_DNA"/>
</dbReference>
<dbReference type="EMBL" id="DQ008354">
    <property type="protein sequence ID" value="AAY57624.1"/>
    <property type="molecule type" value="Genomic_DNA"/>
</dbReference>
<dbReference type="EMBL" id="DQ008355">
    <property type="protein sequence ID" value="AAY57695.1"/>
    <property type="molecule type" value="Genomic_DNA"/>
</dbReference>
<dbReference type="RefSeq" id="NP_040128.1">
    <property type="nucleotide sequence ID" value="NC_001348.1"/>
</dbReference>
<dbReference type="SMR" id="Q4JQX0"/>
<dbReference type="GlyCosmos" id="Q4JQX0">
    <property type="glycosylation" value="2 sites, No reported glycans"/>
</dbReference>
<dbReference type="DNASU" id="1487673"/>
<dbReference type="GeneID" id="1487673"/>
<dbReference type="KEGG" id="vg:1487673"/>
<dbReference type="Proteomes" id="UP000002603">
    <property type="component" value="Genome"/>
</dbReference>
<dbReference type="Proteomes" id="UP000008504">
    <property type="component" value="Genome"/>
</dbReference>
<dbReference type="Proteomes" id="UP000008505">
    <property type="component" value="Genome"/>
</dbReference>
<dbReference type="Proteomes" id="UP000008506">
    <property type="component" value="Genome"/>
</dbReference>
<dbReference type="GO" id="GO:0044175">
    <property type="term" value="C:host cell endosome membrane"/>
    <property type="evidence" value="ECO:0007669"/>
    <property type="project" value="UniProtKB-SubCell"/>
</dbReference>
<dbReference type="GO" id="GO:0044178">
    <property type="term" value="C:host cell Golgi membrane"/>
    <property type="evidence" value="ECO:0007669"/>
    <property type="project" value="UniProtKB-SubCell"/>
</dbReference>
<dbReference type="GO" id="GO:0020002">
    <property type="term" value="C:host cell plasma membrane"/>
    <property type="evidence" value="ECO:0007669"/>
    <property type="project" value="UniProtKB-SubCell"/>
</dbReference>
<dbReference type="GO" id="GO:0016020">
    <property type="term" value="C:membrane"/>
    <property type="evidence" value="ECO:0007669"/>
    <property type="project" value="UniProtKB-KW"/>
</dbReference>
<dbReference type="GO" id="GO:0039700">
    <property type="term" value="P:fusion of viral membrane with host outer nuclear membrane"/>
    <property type="evidence" value="ECO:0007669"/>
    <property type="project" value="UniProtKB-KW"/>
</dbReference>
<dbReference type="GO" id="GO:0060141">
    <property type="term" value="P:symbiont-mediated induction of syncytium formation"/>
    <property type="evidence" value="ECO:0007669"/>
    <property type="project" value="UniProtKB-KW"/>
</dbReference>
<dbReference type="InterPro" id="IPR002567">
    <property type="entry name" value="GK"/>
</dbReference>
<dbReference type="Pfam" id="PF01621">
    <property type="entry name" value="Fusion_gly_K"/>
    <property type="match status" value="1"/>
</dbReference>
<keyword id="KW-0325">Glycoprotein</keyword>
<keyword id="KW-1032">Host cell membrane</keyword>
<keyword id="KW-1039">Host endosome</keyword>
<keyword id="KW-1040">Host Golgi apparatus</keyword>
<keyword id="KW-1043">Host membrane</keyword>
<keyword id="KW-0472">Membrane</keyword>
<keyword id="KW-0732">Signal</keyword>
<keyword id="KW-1180">Syncytium formation induced by viral infection</keyword>
<keyword id="KW-0812">Transmembrane</keyword>
<keyword id="KW-1133">Transmembrane helix</keyword>
<keyword id="KW-1181">Viral primary envelope fusion with host outer nuclear membrane</keyword>
<keyword id="KW-1188">Viral release from host cell</keyword>
<proteinExistence type="inferred from homology"/>
<protein>
    <recommendedName>
        <fullName>Envelope glycoprotein K</fullName>
    </recommendedName>
    <alternativeName>
        <fullName>Syncytial protein</fullName>
    </alternativeName>
</protein>